<protein>
    <recommendedName>
        <fullName evidence="1">Ion-translocating oxidoreductase complex subunit C</fullName>
        <ecNumber evidence="1">7.-.-.-</ecNumber>
    </recommendedName>
    <alternativeName>
        <fullName evidence="1">Rnf electron transport complex subunit C</fullName>
    </alternativeName>
</protein>
<sequence length="705" mass="75954">MLKLFSAFRKDKIWDFDGGIHPPEMKTQSNGTPLRQVPLAPRFIIPLKQHIGAEGELCVNVGDRVLRGQPLTRGRGRMLPVHAPTSGKVIAITPHSTAHPSALAELSVMIDADGEDRWIERDGWADYQRRSREELITRIHQFGVAGLGGAGFPTGVKLQGGGDKIETLIINAAECEPYITADDRLMQDCAAQVVEGIRILAHILQPREVLIGIEDNKPQAISMLRAVLADAHDIALRVIPTKYPSGGAKQLTQILTGKQVPHGGRSSDIGVLMQNVGTAYAVKRAVIDGEPITERVVTLTGESVSRPGNVWARLGTPVSHLLNDAGFCSSADQMVIMGGPLMGFTLPWLDVPVVKITNCLLAPSATEMGETPEEQGCIRCSACADACPADLLPQQLYWFSKGQQHDKATAHNIADCIECGACAWVCPSSIPLVQYFRQEKAEIYAIAQEEKRAAEAKARFEARQARLEREKAARLERHKNAAAQPAAKDQDAIAAALARVKEKQAQATQPVVINAGEKPDNSAVIAAREARKAQARARQAENIPAATEPVEPVDPRKAAVEAAIARAKARKQEQQTAAEPTEPVDPRKAAVEAAIARAKARKQEQQTAAEPTEPVDPRKAAVEAAIARAKARKQEQQAAAEPTEPVDPRKAAVEAAIARAKARKQEQQAAAEPAEPVDPRKAAVAAAIARVQAKKAAQQQVVNEE</sequence>
<keyword id="KW-0004">4Fe-4S</keyword>
<keyword id="KW-0997">Cell inner membrane</keyword>
<keyword id="KW-1003">Cell membrane</keyword>
<keyword id="KW-0249">Electron transport</keyword>
<keyword id="KW-0408">Iron</keyword>
<keyword id="KW-0411">Iron-sulfur</keyword>
<keyword id="KW-0472">Membrane</keyword>
<keyword id="KW-0479">Metal-binding</keyword>
<keyword id="KW-1185">Reference proteome</keyword>
<keyword id="KW-0677">Repeat</keyword>
<keyword id="KW-1278">Translocase</keyword>
<keyword id="KW-0813">Transport</keyword>
<comment type="function">
    <text evidence="1">Part of a membrane-bound complex that couples electron transfer with translocation of ions across the membrane.</text>
</comment>
<comment type="cofactor">
    <cofactor evidence="1">
        <name>[4Fe-4S] cluster</name>
        <dbReference type="ChEBI" id="CHEBI:49883"/>
    </cofactor>
    <text evidence="1">Binds 2 [4Fe-4S] clusters per subunit.</text>
</comment>
<comment type="subunit">
    <text evidence="1">The complex is composed of six subunits: RnfA, RnfB, RnfC, RnfD, RnfE and RnfG.</text>
</comment>
<comment type="subcellular location">
    <subcellularLocation>
        <location evidence="1">Cell inner membrane</location>
        <topology evidence="1">Peripheral membrane protein</topology>
    </subcellularLocation>
</comment>
<comment type="similarity">
    <text evidence="1">Belongs to the 4Fe4S bacterial-type ferredoxin family. RnfC subfamily.</text>
</comment>
<accession>A8AH10</accession>
<dbReference type="EC" id="7.-.-.-" evidence="1"/>
<dbReference type="EMBL" id="CP000822">
    <property type="protein sequence ID" value="ABV12773.1"/>
    <property type="molecule type" value="Genomic_DNA"/>
</dbReference>
<dbReference type="RefSeq" id="WP_012132513.1">
    <property type="nucleotide sequence ID" value="NC_009792.1"/>
</dbReference>
<dbReference type="SMR" id="A8AH10"/>
<dbReference type="STRING" id="290338.CKO_01641"/>
<dbReference type="GeneID" id="45135683"/>
<dbReference type="KEGG" id="cko:CKO_01641"/>
<dbReference type="HOGENOM" id="CLU_010808_2_1_6"/>
<dbReference type="OrthoDB" id="9767754at2"/>
<dbReference type="Proteomes" id="UP000008148">
    <property type="component" value="Chromosome"/>
</dbReference>
<dbReference type="GO" id="GO:0005886">
    <property type="term" value="C:plasma membrane"/>
    <property type="evidence" value="ECO:0007669"/>
    <property type="project" value="UniProtKB-SubCell"/>
</dbReference>
<dbReference type="GO" id="GO:0051539">
    <property type="term" value="F:4 iron, 4 sulfur cluster binding"/>
    <property type="evidence" value="ECO:0007669"/>
    <property type="project" value="UniProtKB-KW"/>
</dbReference>
<dbReference type="GO" id="GO:0009055">
    <property type="term" value="F:electron transfer activity"/>
    <property type="evidence" value="ECO:0007669"/>
    <property type="project" value="InterPro"/>
</dbReference>
<dbReference type="GO" id="GO:0046872">
    <property type="term" value="F:metal ion binding"/>
    <property type="evidence" value="ECO:0007669"/>
    <property type="project" value="UniProtKB-KW"/>
</dbReference>
<dbReference type="GO" id="GO:0022900">
    <property type="term" value="P:electron transport chain"/>
    <property type="evidence" value="ECO:0007669"/>
    <property type="project" value="UniProtKB-UniRule"/>
</dbReference>
<dbReference type="Gene3D" id="3.30.70.20">
    <property type="match status" value="1"/>
</dbReference>
<dbReference type="Gene3D" id="3.40.50.11540">
    <property type="entry name" value="NADH-ubiquinone oxidoreductase 51kDa subunit"/>
    <property type="match status" value="1"/>
</dbReference>
<dbReference type="HAMAP" id="MF_00461">
    <property type="entry name" value="RsxC_RnfC"/>
    <property type="match status" value="1"/>
</dbReference>
<dbReference type="InterPro" id="IPR017896">
    <property type="entry name" value="4Fe4S_Fe-S-bd"/>
</dbReference>
<dbReference type="InterPro" id="IPR017900">
    <property type="entry name" value="4Fe4S_Fe_S_CS"/>
</dbReference>
<dbReference type="InterPro" id="IPR010208">
    <property type="entry name" value="Ion_transpt_RnfC/RsxC"/>
</dbReference>
<dbReference type="InterPro" id="IPR011538">
    <property type="entry name" value="Nuo51_FMN-bd"/>
</dbReference>
<dbReference type="InterPro" id="IPR037225">
    <property type="entry name" value="Nuo51_FMN-bd_sf"/>
</dbReference>
<dbReference type="InterPro" id="IPR026902">
    <property type="entry name" value="RnfC_N"/>
</dbReference>
<dbReference type="InterPro" id="IPR019554">
    <property type="entry name" value="Soluble_ligand-bd"/>
</dbReference>
<dbReference type="NCBIfam" id="NF003454">
    <property type="entry name" value="PRK05035.1"/>
    <property type="match status" value="1"/>
</dbReference>
<dbReference type="NCBIfam" id="TIGR01945">
    <property type="entry name" value="rnfC"/>
    <property type="match status" value="1"/>
</dbReference>
<dbReference type="PANTHER" id="PTHR43034">
    <property type="entry name" value="ION-TRANSLOCATING OXIDOREDUCTASE COMPLEX SUBUNIT C"/>
    <property type="match status" value="1"/>
</dbReference>
<dbReference type="PANTHER" id="PTHR43034:SF2">
    <property type="entry name" value="ION-TRANSLOCATING OXIDOREDUCTASE COMPLEX SUBUNIT C"/>
    <property type="match status" value="1"/>
</dbReference>
<dbReference type="Pfam" id="PF01512">
    <property type="entry name" value="Complex1_51K"/>
    <property type="match status" value="1"/>
</dbReference>
<dbReference type="Pfam" id="PF12838">
    <property type="entry name" value="Fer4_7"/>
    <property type="match status" value="1"/>
</dbReference>
<dbReference type="Pfam" id="PF13375">
    <property type="entry name" value="RnfC_N"/>
    <property type="match status" value="1"/>
</dbReference>
<dbReference type="Pfam" id="PF10531">
    <property type="entry name" value="SLBB"/>
    <property type="match status" value="1"/>
</dbReference>
<dbReference type="SUPFAM" id="SSF46548">
    <property type="entry name" value="alpha-helical ferredoxin"/>
    <property type="match status" value="1"/>
</dbReference>
<dbReference type="SUPFAM" id="SSF142019">
    <property type="entry name" value="Nqo1 FMN-binding domain-like"/>
    <property type="match status" value="1"/>
</dbReference>
<dbReference type="PROSITE" id="PS00198">
    <property type="entry name" value="4FE4S_FER_1"/>
    <property type="match status" value="2"/>
</dbReference>
<dbReference type="PROSITE" id="PS51379">
    <property type="entry name" value="4FE4S_FER_2"/>
    <property type="match status" value="2"/>
</dbReference>
<feature type="chain" id="PRO_1000013600" description="Ion-translocating oxidoreductase complex subunit C">
    <location>
        <begin position="1"/>
        <end position="705"/>
    </location>
</feature>
<feature type="domain" description="4Fe-4S ferredoxin-type 1" evidence="1">
    <location>
        <begin position="368"/>
        <end position="397"/>
    </location>
</feature>
<feature type="domain" description="4Fe-4S ferredoxin-type 2" evidence="1">
    <location>
        <begin position="407"/>
        <end position="435"/>
    </location>
</feature>
<feature type="region of interest" description="Disordered" evidence="2">
    <location>
        <begin position="536"/>
        <end position="684"/>
    </location>
</feature>
<feature type="binding site" evidence="1">
    <location>
        <position position="377"/>
    </location>
    <ligand>
        <name>[4Fe-4S] cluster</name>
        <dbReference type="ChEBI" id="CHEBI:49883"/>
        <label>1</label>
    </ligand>
</feature>
<feature type="binding site" evidence="1">
    <location>
        <position position="380"/>
    </location>
    <ligand>
        <name>[4Fe-4S] cluster</name>
        <dbReference type="ChEBI" id="CHEBI:49883"/>
        <label>1</label>
    </ligand>
</feature>
<feature type="binding site" evidence="1">
    <location>
        <position position="383"/>
    </location>
    <ligand>
        <name>[4Fe-4S] cluster</name>
        <dbReference type="ChEBI" id="CHEBI:49883"/>
        <label>1</label>
    </ligand>
</feature>
<feature type="binding site" evidence="1">
    <location>
        <position position="387"/>
    </location>
    <ligand>
        <name>[4Fe-4S] cluster</name>
        <dbReference type="ChEBI" id="CHEBI:49883"/>
        <label>2</label>
    </ligand>
</feature>
<feature type="binding site" evidence="1">
    <location>
        <position position="416"/>
    </location>
    <ligand>
        <name>[4Fe-4S] cluster</name>
        <dbReference type="ChEBI" id="CHEBI:49883"/>
        <label>2</label>
    </ligand>
</feature>
<feature type="binding site" evidence="1">
    <location>
        <position position="419"/>
    </location>
    <ligand>
        <name>[4Fe-4S] cluster</name>
        <dbReference type="ChEBI" id="CHEBI:49883"/>
        <label>2</label>
    </ligand>
</feature>
<feature type="binding site" evidence="1">
    <location>
        <position position="422"/>
    </location>
    <ligand>
        <name>[4Fe-4S] cluster</name>
        <dbReference type="ChEBI" id="CHEBI:49883"/>
        <label>2</label>
    </ligand>
</feature>
<feature type="binding site" evidence="1">
    <location>
        <position position="426"/>
    </location>
    <ligand>
        <name>[4Fe-4S] cluster</name>
        <dbReference type="ChEBI" id="CHEBI:49883"/>
        <label>1</label>
    </ligand>
</feature>
<organism>
    <name type="scientific">Citrobacter koseri (strain ATCC BAA-895 / CDC 4225-83 / SGSC4696)</name>
    <dbReference type="NCBI Taxonomy" id="290338"/>
    <lineage>
        <taxon>Bacteria</taxon>
        <taxon>Pseudomonadati</taxon>
        <taxon>Pseudomonadota</taxon>
        <taxon>Gammaproteobacteria</taxon>
        <taxon>Enterobacterales</taxon>
        <taxon>Enterobacteriaceae</taxon>
        <taxon>Citrobacter</taxon>
    </lineage>
</organism>
<evidence type="ECO:0000255" key="1">
    <source>
        <dbReference type="HAMAP-Rule" id="MF_00461"/>
    </source>
</evidence>
<evidence type="ECO:0000256" key="2">
    <source>
        <dbReference type="SAM" id="MobiDB-lite"/>
    </source>
</evidence>
<name>RNFC_CITK8</name>
<reference key="1">
    <citation type="submission" date="2007-08" db="EMBL/GenBank/DDBJ databases">
        <authorList>
            <consortium name="The Citrobacter koseri Genome Sequencing Project"/>
            <person name="McClelland M."/>
            <person name="Sanderson E.K."/>
            <person name="Porwollik S."/>
            <person name="Spieth J."/>
            <person name="Clifton W.S."/>
            <person name="Latreille P."/>
            <person name="Courtney L."/>
            <person name="Wang C."/>
            <person name="Pepin K."/>
            <person name="Bhonagiri V."/>
            <person name="Nash W."/>
            <person name="Johnson M."/>
            <person name="Thiruvilangam P."/>
            <person name="Wilson R."/>
        </authorList>
    </citation>
    <scope>NUCLEOTIDE SEQUENCE [LARGE SCALE GENOMIC DNA]</scope>
    <source>
        <strain>ATCC BAA-895 / CDC 4225-83 / SGSC4696</strain>
    </source>
</reference>
<proteinExistence type="inferred from homology"/>
<gene>
    <name evidence="1" type="primary">rnfC</name>
    <name type="ordered locus">CKO_01641</name>
</gene>